<protein>
    <recommendedName>
        <fullName evidence="1">Phosphoglucosamine mutase</fullName>
        <ecNumber evidence="1">5.4.2.10</ecNumber>
    </recommendedName>
</protein>
<organism>
    <name type="scientific">Shewanella oneidensis (strain ATCC 700550 / JCM 31522 / CIP 106686 / LMG 19005 / NCIMB 14063 / MR-1)</name>
    <dbReference type="NCBI Taxonomy" id="211586"/>
    <lineage>
        <taxon>Bacteria</taxon>
        <taxon>Pseudomonadati</taxon>
        <taxon>Pseudomonadota</taxon>
        <taxon>Gammaproteobacteria</taxon>
        <taxon>Alteromonadales</taxon>
        <taxon>Shewanellaceae</taxon>
        <taxon>Shewanella</taxon>
    </lineage>
</organism>
<feature type="chain" id="PRO_0000147954" description="Phosphoglucosamine mutase">
    <location>
        <begin position="1"/>
        <end position="445"/>
    </location>
</feature>
<feature type="active site" description="Phosphoserine intermediate" evidence="1">
    <location>
        <position position="102"/>
    </location>
</feature>
<feature type="binding site" description="via phosphate group" evidence="1">
    <location>
        <position position="102"/>
    </location>
    <ligand>
        <name>Mg(2+)</name>
        <dbReference type="ChEBI" id="CHEBI:18420"/>
    </ligand>
</feature>
<feature type="binding site" evidence="1">
    <location>
        <position position="241"/>
    </location>
    <ligand>
        <name>Mg(2+)</name>
        <dbReference type="ChEBI" id="CHEBI:18420"/>
    </ligand>
</feature>
<feature type="binding site" evidence="1">
    <location>
        <position position="243"/>
    </location>
    <ligand>
        <name>Mg(2+)</name>
        <dbReference type="ChEBI" id="CHEBI:18420"/>
    </ligand>
</feature>
<feature type="binding site" evidence="1">
    <location>
        <position position="245"/>
    </location>
    <ligand>
        <name>Mg(2+)</name>
        <dbReference type="ChEBI" id="CHEBI:18420"/>
    </ligand>
</feature>
<feature type="modified residue" description="Phosphoserine" evidence="1">
    <location>
        <position position="102"/>
    </location>
</feature>
<sequence length="445" mass="47584">MSERKFFGTDGIRGKVGSGQMTPELALKLGWAAGRVLSRSGTKKVIIGKDTRISGYMFESALEAGLSAAGLNVMLMGPMPTPAVAYLTRTFRAEAGVVISASHNPYYDNGIKFFSTDGSKLDDNLELEIEAELEKPLVCVESHLLGKVSRIEDARGRYIEYCKGNFPADQTLTGLKIVVDCAHGATYHIAPAVFRELGAEVIAIGDKPNGVNINDKVGATSMAKICETVLAETADLGIALDGDGDRIMMVNSKGEVIDGDQILYILACDAKARGVLRGGVVGTLMSNLGLDLALQALDIPFARSKVGDRYVMELLKELDWRIGGENSGHILNLDHGTTGDGIVAGILVLAAMRRQNATLEQLTAPMEMLPQVLVNVRFEGEHDPLSSDKVKAAQAQVESELGVRGRVLLRKSGTEPLIRVMVEGDDHNTVLAHANLIADAVKSAS</sequence>
<name>GLMM_SHEON</name>
<keyword id="KW-0413">Isomerase</keyword>
<keyword id="KW-0460">Magnesium</keyword>
<keyword id="KW-0479">Metal-binding</keyword>
<keyword id="KW-0597">Phosphoprotein</keyword>
<keyword id="KW-1185">Reference proteome</keyword>
<evidence type="ECO:0000255" key="1">
    <source>
        <dbReference type="HAMAP-Rule" id="MF_01554"/>
    </source>
</evidence>
<reference key="1">
    <citation type="journal article" date="2002" name="Nat. Biotechnol.">
        <title>Genome sequence of the dissimilatory metal ion-reducing bacterium Shewanella oneidensis.</title>
        <authorList>
            <person name="Heidelberg J.F."/>
            <person name="Paulsen I.T."/>
            <person name="Nelson K.E."/>
            <person name="Gaidos E.J."/>
            <person name="Nelson W.C."/>
            <person name="Read T.D."/>
            <person name="Eisen J.A."/>
            <person name="Seshadri R."/>
            <person name="Ward N.L."/>
            <person name="Methe B.A."/>
            <person name="Clayton R.A."/>
            <person name="Meyer T."/>
            <person name="Tsapin A."/>
            <person name="Scott J."/>
            <person name="Beanan M.J."/>
            <person name="Brinkac L.M."/>
            <person name="Daugherty S.C."/>
            <person name="DeBoy R.T."/>
            <person name="Dodson R.J."/>
            <person name="Durkin A.S."/>
            <person name="Haft D.H."/>
            <person name="Kolonay J.F."/>
            <person name="Madupu R."/>
            <person name="Peterson J.D."/>
            <person name="Umayam L.A."/>
            <person name="White O."/>
            <person name="Wolf A.M."/>
            <person name="Vamathevan J.J."/>
            <person name="Weidman J.F."/>
            <person name="Impraim M."/>
            <person name="Lee K."/>
            <person name="Berry K.J."/>
            <person name="Lee C."/>
            <person name="Mueller J."/>
            <person name="Khouri H.M."/>
            <person name="Gill J."/>
            <person name="Utterback T.R."/>
            <person name="McDonald L.A."/>
            <person name="Feldblyum T.V."/>
            <person name="Smith H.O."/>
            <person name="Venter J.C."/>
            <person name="Nealson K.H."/>
            <person name="Fraser C.M."/>
        </authorList>
    </citation>
    <scope>NUCLEOTIDE SEQUENCE [LARGE SCALE GENOMIC DNA]</scope>
    <source>
        <strain>ATCC 700550 / JCM 31522 / CIP 106686 / LMG 19005 / NCIMB 14063 / MR-1</strain>
    </source>
</reference>
<dbReference type="EC" id="5.4.2.10" evidence="1"/>
<dbReference type="EMBL" id="AE014299">
    <property type="protein sequence ID" value="AAN54269.1"/>
    <property type="molecule type" value="Genomic_DNA"/>
</dbReference>
<dbReference type="RefSeq" id="NP_716824.1">
    <property type="nucleotide sequence ID" value="NC_004347.2"/>
</dbReference>
<dbReference type="RefSeq" id="WP_011071429.1">
    <property type="nucleotide sequence ID" value="NC_004347.2"/>
</dbReference>
<dbReference type="SMR" id="Q8EHM0"/>
<dbReference type="STRING" id="211586.SO_1199"/>
<dbReference type="PaxDb" id="211586-SO_1199"/>
<dbReference type="KEGG" id="son:SO_1199"/>
<dbReference type="PATRIC" id="fig|211586.12.peg.1151"/>
<dbReference type="eggNOG" id="COG1109">
    <property type="taxonomic scope" value="Bacteria"/>
</dbReference>
<dbReference type="HOGENOM" id="CLU_016950_7_0_6"/>
<dbReference type="OrthoDB" id="9803322at2"/>
<dbReference type="PhylomeDB" id="Q8EHM0"/>
<dbReference type="BioCyc" id="SONE211586:G1GMP-1109-MONOMER"/>
<dbReference type="Proteomes" id="UP000008186">
    <property type="component" value="Chromosome"/>
</dbReference>
<dbReference type="GO" id="GO:0005829">
    <property type="term" value="C:cytosol"/>
    <property type="evidence" value="ECO:0000318"/>
    <property type="project" value="GO_Central"/>
</dbReference>
<dbReference type="GO" id="GO:0000287">
    <property type="term" value="F:magnesium ion binding"/>
    <property type="evidence" value="ECO:0007669"/>
    <property type="project" value="UniProtKB-UniRule"/>
</dbReference>
<dbReference type="GO" id="GO:0008966">
    <property type="term" value="F:phosphoglucosamine mutase activity"/>
    <property type="evidence" value="ECO:0000318"/>
    <property type="project" value="GO_Central"/>
</dbReference>
<dbReference type="GO" id="GO:0004615">
    <property type="term" value="F:phosphomannomutase activity"/>
    <property type="evidence" value="ECO:0000318"/>
    <property type="project" value="GO_Central"/>
</dbReference>
<dbReference type="GO" id="GO:0005975">
    <property type="term" value="P:carbohydrate metabolic process"/>
    <property type="evidence" value="ECO:0007669"/>
    <property type="project" value="InterPro"/>
</dbReference>
<dbReference type="GO" id="GO:0009252">
    <property type="term" value="P:peptidoglycan biosynthetic process"/>
    <property type="evidence" value="ECO:0000318"/>
    <property type="project" value="GO_Central"/>
</dbReference>
<dbReference type="GO" id="GO:0006048">
    <property type="term" value="P:UDP-N-acetylglucosamine biosynthetic process"/>
    <property type="evidence" value="ECO:0000318"/>
    <property type="project" value="GO_Central"/>
</dbReference>
<dbReference type="CDD" id="cd05802">
    <property type="entry name" value="GlmM"/>
    <property type="match status" value="1"/>
</dbReference>
<dbReference type="FunFam" id="3.30.310.50:FF:000001">
    <property type="entry name" value="Phosphoglucosamine mutase"/>
    <property type="match status" value="1"/>
</dbReference>
<dbReference type="FunFam" id="3.40.120.10:FF:000001">
    <property type="entry name" value="Phosphoglucosamine mutase"/>
    <property type="match status" value="1"/>
</dbReference>
<dbReference type="FunFam" id="3.40.120.10:FF:000003">
    <property type="entry name" value="Phosphoglucosamine mutase"/>
    <property type="match status" value="1"/>
</dbReference>
<dbReference type="Gene3D" id="3.40.120.10">
    <property type="entry name" value="Alpha-D-Glucose-1,6-Bisphosphate, subunit A, domain 3"/>
    <property type="match status" value="3"/>
</dbReference>
<dbReference type="Gene3D" id="3.30.310.50">
    <property type="entry name" value="Alpha-D-phosphohexomutase, C-terminal domain"/>
    <property type="match status" value="1"/>
</dbReference>
<dbReference type="HAMAP" id="MF_01554_B">
    <property type="entry name" value="GlmM_B"/>
    <property type="match status" value="1"/>
</dbReference>
<dbReference type="InterPro" id="IPR005844">
    <property type="entry name" value="A-D-PHexomutase_a/b/a-I"/>
</dbReference>
<dbReference type="InterPro" id="IPR016055">
    <property type="entry name" value="A-D-PHexomutase_a/b/a-I/II/III"/>
</dbReference>
<dbReference type="InterPro" id="IPR005845">
    <property type="entry name" value="A-D-PHexomutase_a/b/a-II"/>
</dbReference>
<dbReference type="InterPro" id="IPR005846">
    <property type="entry name" value="A-D-PHexomutase_a/b/a-III"/>
</dbReference>
<dbReference type="InterPro" id="IPR005843">
    <property type="entry name" value="A-D-PHexomutase_C"/>
</dbReference>
<dbReference type="InterPro" id="IPR036900">
    <property type="entry name" value="A-D-PHexomutase_C_sf"/>
</dbReference>
<dbReference type="InterPro" id="IPR016066">
    <property type="entry name" value="A-D-PHexomutase_CS"/>
</dbReference>
<dbReference type="InterPro" id="IPR005841">
    <property type="entry name" value="Alpha-D-phosphohexomutase_SF"/>
</dbReference>
<dbReference type="InterPro" id="IPR006352">
    <property type="entry name" value="GlmM_bact"/>
</dbReference>
<dbReference type="InterPro" id="IPR050060">
    <property type="entry name" value="Phosphoglucosamine_mutase"/>
</dbReference>
<dbReference type="NCBIfam" id="TIGR01455">
    <property type="entry name" value="glmM"/>
    <property type="match status" value="1"/>
</dbReference>
<dbReference type="NCBIfam" id="NF008139">
    <property type="entry name" value="PRK10887.1"/>
    <property type="match status" value="1"/>
</dbReference>
<dbReference type="PANTHER" id="PTHR42946:SF1">
    <property type="entry name" value="PHOSPHOGLUCOMUTASE (ALPHA-D-GLUCOSE-1,6-BISPHOSPHATE-DEPENDENT)"/>
    <property type="match status" value="1"/>
</dbReference>
<dbReference type="PANTHER" id="PTHR42946">
    <property type="entry name" value="PHOSPHOHEXOSE MUTASE"/>
    <property type="match status" value="1"/>
</dbReference>
<dbReference type="Pfam" id="PF02878">
    <property type="entry name" value="PGM_PMM_I"/>
    <property type="match status" value="1"/>
</dbReference>
<dbReference type="Pfam" id="PF02879">
    <property type="entry name" value="PGM_PMM_II"/>
    <property type="match status" value="1"/>
</dbReference>
<dbReference type="Pfam" id="PF02880">
    <property type="entry name" value="PGM_PMM_III"/>
    <property type="match status" value="1"/>
</dbReference>
<dbReference type="Pfam" id="PF00408">
    <property type="entry name" value="PGM_PMM_IV"/>
    <property type="match status" value="1"/>
</dbReference>
<dbReference type="PRINTS" id="PR00509">
    <property type="entry name" value="PGMPMM"/>
</dbReference>
<dbReference type="SUPFAM" id="SSF55957">
    <property type="entry name" value="Phosphoglucomutase, C-terminal domain"/>
    <property type="match status" value="1"/>
</dbReference>
<dbReference type="SUPFAM" id="SSF53738">
    <property type="entry name" value="Phosphoglucomutase, first 3 domains"/>
    <property type="match status" value="3"/>
</dbReference>
<dbReference type="PROSITE" id="PS00710">
    <property type="entry name" value="PGM_PMM"/>
    <property type="match status" value="1"/>
</dbReference>
<gene>
    <name evidence="1" type="primary">glmM</name>
    <name type="ordered locus">SO_1199</name>
</gene>
<comment type="function">
    <text evidence="1">Catalyzes the conversion of glucosamine-6-phosphate to glucosamine-1-phosphate.</text>
</comment>
<comment type="catalytic activity">
    <reaction evidence="1">
        <text>alpha-D-glucosamine 1-phosphate = D-glucosamine 6-phosphate</text>
        <dbReference type="Rhea" id="RHEA:23424"/>
        <dbReference type="ChEBI" id="CHEBI:58516"/>
        <dbReference type="ChEBI" id="CHEBI:58725"/>
        <dbReference type="EC" id="5.4.2.10"/>
    </reaction>
</comment>
<comment type="cofactor">
    <cofactor evidence="1">
        <name>Mg(2+)</name>
        <dbReference type="ChEBI" id="CHEBI:18420"/>
    </cofactor>
    <text evidence="1">Binds 1 Mg(2+) ion per subunit.</text>
</comment>
<comment type="PTM">
    <text evidence="1">Activated by phosphorylation.</text>
</comment>
<comment type="similarity">
    <text evidence="1">Belongs to the phosphohexose mutase family.</text>
</comment>
<accession>Q8EHM0</accession>
<proteinExistence type="inferred from homology"/>